<proteinExistence type="inferred from homology"/>
<comment type="function">
    <text evidence="1">Bifunctional enzyme that catalyzes two sequential steps of tryptophan biosynthetic pathway. The first reaction is catalyzed by the isomerase, coded by the TrpF domain; the second reaction is catalyzed by the synthase, coded by the TrpC domain (By similarity).</text>
</comment>
<comment type="catalytic activity">
    <reaction>
        <text>N-(5-phospho-beta-D-ribosyl)anthranilate = 1-(2-carboxyphenylamino)-1-deoxy-D-ribulose 5-phosphate</text>
        <dbReference type="Rhea" id="RHEA:21540"/>
        <dbReference type="ChEBI" id="CHEBI:18277"/>
        <dbReference type="ChEBI" id="CHEBI:58613"/>
        <dbReference type="EC" id="5.3.1.24"/>
    </reaction>
</comment>
<comment type="catalytic activity">
    <reaction>
        <text>1-(2-carboxyphenylamino)-1-deoxy-D-ribulose 5-phosphate + H(+) = (1S,2R)-1-C-(indol-3-yl)glycerol 3-phosphate + CO2 + H2O</text>
        <dbReference type="Rhea" id="RHEA:23476"/>
        <dbReference type="ChEBI" id="CHEBI:15377"/>
        <dbReference type="ChEBI" id="CHEBI:15378"/>
        <dbReference type="ChEBI" id="CHEBI:16526"/>
        <dbReference type="ChEBI" id="CHEBI:58613"/>
        <dbReference type="ChEBI" id="CHEBI:58866"/>
        <dbReference type="EC" id="4.1.1.48"/>
    </reaction>
</comment>
<comment type="pathway">
    <text>Amino-acid biosynthesis; L-tryptophan biosynthesis; L-tryptophan from chorismate: step 3/5.</text>
</comment>
<comment type="pathway">
    <text>Amino-acid biosynthesis; L-tryptophan biosynthesis; L-tryptophan from chorismate: step 4/5.</text>
</comment>
<comment type="subunit">
    <text evidence="1">Monomer.</text>
</comment>
<comment type="similarity">
    <text evidence="2">In the N-terminal section; belongs to the TrpC family.</text>
</comment>
<comment type="similarity">
    <text evidence="2">In the C-terminal section; belongs to the TrpF family.</text>
</comment>
<sequence>MNSILKEIINDKLMWVKYHKKKQPLFTFQNKIVRSNYNFKNSLKSIHPSYILEIKKASPSLGIINNKLDLKKISLIYKKYASSISILTDEKYFHGNFEFIPIVRKIAHRQPILCKDFFIDPYQIYLARYYQADAILLMLSILNDNQYVFLRNIAEMLNMDVLTEIENKKELTRAINLKSKIIGINNRNLNNLSIDIQKTKVLAPLIPKKIIIISESGIQNYNQIRQLKPFVQGFLIGSNLMRKKNLEEAVCKMILGNNKICGLTQSSDVKIIKEYGIVYGGLIFCKFSPRYINCNNAYSIINNVSLKYIGVFCNENLKRVAYIGTKLSLHAVQLHGNEDQIYINNLKLILPKHIKIWKSIIYLDFLKNQKHLFYNVNKYIIDNKDGGSGKTFNWKYLKNCKLDNVILAGGLDINNCILATDLGCYGYDFNSKLESSPGIKDLKKIVALTYSLRRHTVFNYRNLICLGKK</sequence>
<organism>
    <name type="scientific">Buchnera aphidicola subsp. Baizongia pistaciae (strain Bp)</name>
    <dbReference type="NCBI Taxonomy" id="224915"/>
    <lineage>
        <taxon>Bacteria</taxon>
        <taxon>Pseudomonadati</taxon>
        <taxon>Pseudomonadota</taxon>
        <taxon>Gammaproteobacteria</taxon>
        <taxon>Enterobacterales</taxon>
        <taxon>Erwiniaceae</taxon>
        <taxon>Buchnera</taxon>
    </lineage>
</organism>
<name>TRPC_BUCBP</name>
<accession>P59459</accession>
<reference key="1">
    <citation type="journal article" date="2003" name="Proc. Natl. Acad. Sci. U.S.A.">
        <title>Reductive genome evolution in Buchnera aphidicola.</title>
        <authorList>
            <person name="van Ham R.C.H.J."/>
            <person name="Kamerbeek J."/>
            <person name="Palacios C."/>
            <person name="Rausell C."/>
            <person name="Abascal F."/>
            <person name="Bastolla U."/>
            <person name="Fernandez J.M."/>
            <person name="Jimenez L."/>
            <person name="Postigo M."/>
            <person name="Silva F.J."/>
            <person name="Tamames J."/>
            <person name="Viguera E."/>
            <person name="Latorre A."/>
            <person name="Valencia A."/>
            <person name="Moran F."/>
            <person name="Moya A."/>
        </authorList>
    </citation>
    <scope>NUCLEOTIDE SEQUENCE [LARGE SCALE GENOMIC DNA]</scope>
    <source>
        <strain>Bp</strain>
    </source>
</reference>
<feature type="chain" id="PRO_0000154273" description="Tryptophan biosynthesis protein TrpCF">
    <location>
        <begin position="1"/>
        <end position="469"/>
    </location>
</feature>
<feature type="region of interest" description="Indole-3-glycerol phosphate synthase">
    <location>
        <begin position="1"/>
        <end position="257"/>
    </location>
</feature>
<feature type="region of interest" description="N-(5'-phosphoribosyl)anthranilate isomerase">
    <location>
        <begin position="258"/>
        <end position="469"/>
    </location>
</feature>
<keyword id="KW-0028">Amino-acid biosynthesis</keyword>
<keyword id="KW-0057">Aromatic amino acid biosynthesis</keyword>
<keyword id="KW-0210">Decarboxylase</keyword>
<keyword id="KW-0413">Isomerase</keyword>
<keyword id="KW-0456">Lyase</keyword>
<keyword id="KW-0511">Multifunctional enzyme</keyword>
<keyword id="KW-1185">Reference proteome</keyword>
<keyword id="KW-0822">Tryptophan biosynthesis</keyword>
<protein>
    <recommendedName>
        <fullName>Tryptophan biosynthesis protein TrpCF</fullName>
    </recommendedName>
    <domain>
        <recommendedName>
            <fullName>Indole-3-glycerol phosphate synthase</fullName>
            <shortName>IGPS</shortName>
            <ecNumber>4.1.1.48</ecNumber>
        </recommendedName>
    </domain>
    <domain>
        <recommendedName>
            <fullName>N-(5'-phospho-ribosyl)anthranilate isomerase</fullName>
            <shortName>PRAI</shortName>
            <ecNumber>5.3.1.24</ecNumber>
        </recommendedName>
    </domain>
</protein>
<dbReference type="EC" id="4.1.1.48"/>
<dbReference type="EC" id="5.3.1.24"/>
<dbReference type="EMBL" id="AE016826">
    <property type="protein sequence ID" value="AAO26986.1"/>
    <property type="molecule type" value="Genomic_DNA"/>
</dbReference>
<dbReference type="SMR" id="P59459"/>
<dbReference type="STRING" id="224915.bbp_259"/>
<dbReference type="KEGG" id="bab:bbp_259"/>
<dbReference type="eggNOG" id="COG0134">
    <property type="taxonomic scope" value="Bacteria"/>
</dbReference>
<dbReference type="eggNOG" id="COG0135">
    <property type="taxonomic scope" value="Bacteria"/>
</dbReference>
<dbReference type="HOGENOM" id="CLU_007713_1_2_6"/>
<dbReference type="OrthoDB" id="9804217at2"/>
<dbReference type="UniPathway" id="UPA00035">
    <property type="reaction ID" value="UER00042"/>
</dbReference>
<dbReference type="UniPathway" id="UPA00035">
    <property type="reaction ID" value="UER00043"/>
</dbReference>
<dbReference type="Proteomes" id="UP000000601">
    <property type="component" value="Chromosome"/>
</dbReference>
<dbReference type="GO" id="GO:0004425">
    <property type="term" value="F:indole-3-glycerol-phosphate synthase activity"/>
    <property type="evidence" value="ECO:0007669"/>
    <property type="project" value="UniProtKB-UniRule"/>
</dbReference>
<dbReference type="GO" id="GO:0004640">
    <property type="term" value="F:phosphoribosylanthranilate isomerase activity"/>
    <property type="evidence" value="ECO:0007669"/>
    <property type="project" value="UniProtKB-UniRule"/>
</dbReference>
<dbReference type="GO" id="GO:0000162">
    <property type="term" value="P:L-tryptophan biosynthetic process"/>
    <property type="evidence" value="ECO:0007669"/>
    <property type="project" value="UniProtKB-UniRule"/>
</dbReference>
<dbReference type="CDD" id="cd00331">
    <property type="entry name" value="IGPS"/>
    <property type="match status" value="1"/>
</dbReference>
<dbReference type="CDD" id="cd00405">
    <property type="entry name" value="PRAI"/>
    <property type="match status" value="1"/>
</dbReference>
<dbReference type="FunFam" id="3.20.20.70:FF:000024">
    <property type="entry name" value="Indole-3-glycerol phosphate synthase"/>
    <property type="match status" value="1"/>
</dbReference>
<dbReference type="Gene3D" id="3.20.20.70">
    <property type="entry name" value="Aldolase class I"/>
    <property type="match status" value="2"/>
</dbReference>
<dbReference type="HAMAP" id="MF_00134_B">
    <property type="entry name" value="IGPS_B"/>
    <property type="match status" value="1"/>
</dbReference>
<dbReference type="HAMAP" id="MF_00135">
    <property type="entry name" value="PRAI"/>
    <property type="match status" value="1"/>
</dbReference>
<dbReference type="InterPro" id="IPR013785">
    <property type="entry name" value="Aldolase_TIM"/>
</dbReference>
<dbReference type="InterPro" id="IPR045186">
    <property type="entry name" value="Indole-3-glycerol_P_synth"/>
</dbReference>
<dbReference type="InterPro" id="IPR013798">
    <property type="entry name" value="Indole-3-glycerol_P_synth_dom"/>
</dbReference>
<dbReference type="InterPro" id="IPR001468">
    <property type="entry name" value="Indole-3-GlycerolPSynthase_CS"/>
</dbReference>
<dbReference type="InterPro" id="IPR001240">
    <property type="entry name" value="PRAI_dom"/>
</dbReference>
<dbReference type="InterPro" id="IPR011060">
    <property type="entry name" value="RibuloseP-bd_barrel"/>
</dbReference>
<dbReference type="NCBIfam" id="NF006945">
    <property type="entry name" value="PRK09427.1"/>
    <property type="match status" value="1"/>
</dbReference>
<dbReference type="PANTHER" id="PTHR22854:SF2">
    <property type="entry name" value="INDOLE-3-GLYCEROL-PHOSPHATE SYNTHASE"/>
    <property type="match status" value="1"/>
</dbReference>
<dbReference type="PANTHER" id="PTHR22854">
    <property type="entry name" value="TRYPTOPHAN BIOSYNTHESIS PROTEIN"/>
    <property type="match status" value="1"/>
</dbReference>
<dbReference type="Pfam" id="PF00218">
    <property type="entry name" value="IGPS"/>
    <property type="match status" value="1"/>
</dbReference>
<dbReference type="Pfam" id="PF00697">
    <property type="entry name" value="PRAI"/>
    <property type="match status" value="1"/>
</dbReference>
<dbReference type="SUPFAM" id="SSF51366">
    <property type="entry name" value="Ribulose-phoshate binding barrel"/>
    <property type="match status" value="2"/>
</dbReference>
<dbReference type="PROSITE" id="PS00614">
    <property type="entry name" value="IGPS"/>
    <property type="match status" value="1"/>
</dbReference>
<gene>
    <name type="primary">trpC</name>
    <name type="ordered locus">bbp_259</name>
</gene>
<evidence type="ECO:0000250" key="1"/>
<evidence type="ECO:0000305" key="2"/>